<sequence>MQQSEQIVVGRIGAVYGVKGWLKVQSFTDDPESIFEYSPWLLSQKTEREMKVVEWRRHNNGLIARLEGISDRDEAARLTGADICITADELPALADDEFYWRDLIGMRVVNTNGYDMGVVEQIMPTASNDVLVVKANSNDGFGKSERLIPFIQSEYVTAVDKEAKQIQVEWPSDF</sequence>
<feature type="chain" id="PRO_0000163301" description="Ribosome maturation factor RimM">
    <location>
        <begin position="1"/>
        <end position="174"/>
    </location>
</feature>
<feature type="domain" description="PRC barrel" evidence="1">
    <location>
        <begin position="95"/>
        <end position="174"/>
    </location>
</feature>
<reference key="1">
    <citation type="journal article" date="2004" name="Proc. Natl. Acad. Sci. U.S.A.">
        <title>Genome sequence of the deep-sea gamma-proteobacterium Idiomarina loihiensis reveals amino acid fermentation as a source of carbon and energy.</title>
        <authorList>
            <person name="Hou S."/>
            <person name="Saw J.H."/>
            <person name="Lee K.S."/>
            <person name="Freitas T.A."/>
            <person name="Belisle C."/>
            <person name="Kawarabayasi Y."/>
            <person name="Donachie S.P."/>
            <person name="Pikina A."/>
            <person name="Galperin M.Y."/>
            <person name="Koonin E.V."/>
            <person name="Makarova K.S."/>
            <person name="Omelchenko M.V."/>
            <person name="Sorokin A."/>
            <person name="Wolf Y.I."/>
            <person name="Li Q.X."/>
            <person name="Keum Y.S."/>
            <person name="Campbell S."/>
            <person name="Denery J."/>
            <person name="Aizawa S."/>
            <person name="Shibata S."/>
            <person name="Malahoff A."/>
            <person name="Alam M."/>
        </authorList>
    </citation>
    <scope>NUCLEOTIDE SEQUENCE [LARGE SCALE GENOMIC DNA]</scope>
    <source>
        <strain>ATCC BAA-735 / DSM 15497 / L2-TR</strain>
    </source>
</reference>
<comment type="function">
    <text evidence="1">An accessory protein needed during the final step in the assembly of 30S ribosomal subunit, possibly for assembly of the head region. Essential for efficient processing of 16S rRNA. May be needed both before and after RbfA during the maturation of 16S rRNA. It has affinity for free ribosomal 30S subunits but not for 70S ribosomes.</text>
</comment>
<comment type="subunit">
    <text evidence="1">Binds ribosomal protein uS19.</text>
</comment>
<comment type="subcellular location">
    <subcellularLocation>
        <location evidence="1">Cytoplasm</location>
    </subcellularLocation>
</comment>
<comment type="domain">
    <text evidence="1">The PRC barrel domain binds ribosomal protein uS19.</text>
</comment>
<comment type="similarity">
    <text evidence="1">Belongs to the RimM family.</text>
</comment>
<name>RIMM_IDILO</name>
<evidence type="ECO:0000255" key="1">
    <source>
        <dbReference type="HAMAP-Rule" id="MF_00014"/>
    </source>
</evidence>
<protein>
    <recommendedName>
        <fullName evidence="1">Ribosome maturation factor RimM</fullName>
    </recommendedName>
</protein>
<gene>
    <name evidence="1" type="primary">rimM</name>
    <name type="ordered locus">IL1725</name>
</gene>
<organism>
    <name type="scientific">Idiomarina loihiensis (strain ATCC BAA-735 / DSM 15497 / L2-TR)</name>
    <dbReference type="NCBI Taxonomy" id="283942"/>
    <lineage>
        <taxon>Bacteria</taxon>
        <taxon>Pseudomonadati</taxon>
        <taxon>Pseudomonadota</taxon>
        <taxon>Gammaproteobacteria</taxon>
        <taxon>Alteromonadales</taxon>
        <taxon>Idiomarinaceae</taxon>
        <taxon>Idiomarina</taxon>
    </lineage>
</organism>
<proteinExistence type="inferred from homology"/>
<accession>Q5QUU9</accession>
<dbReference type="EMBL" id="AE017340">
    <property type="protein sequence ID" value="AAV82558.1"/>
    <property type="molecule type" value="Genomic_DNA"/>
</dbReference>
<dbReference type="RefSeq" id="WP_011234961.1">
    <property type="nucleotide sequence ID" value="NC_006512.1"/>
</dbReference>
<dbReference type="SMR" id="Q5QUU9"/>
<dbReference type="STRING" id="283942.IL1725"/>
<dbReference type="GeneID" id="41336900"/>
<dbReference type="KEGG" id="ilo:IL1725"/>
<dbReference type="eggNOG" id="COG0806">
    <property type="taxonomic scope" value="Bacteria"/>
</dbReference>
<dbReference type="HOGENOM" id="CLU_077636_1_0_6"/>
<dbReference type="OrthoDB" id="9783509at2"/>
<dbReference type="Proteomes" id="UP000001171">
    <property type="component" value="Chromosome"/>
</dbReference>
<dbReference type="GO" id="GO:0005737">
    <property type="term" value="C:cytoplasm"/>
    <property type="evidence" value="ECO:0007669"/>
    <property type="project" value="UniProtKB-SubCell"/>
</dbReference>
<dbReference type="GO" id="GO:0005840">
    <property type="term" value="C:ribosome"/>
    <property type="evidence" value="ECO:0007669"/>
    <property type="project" value="InterPro"/>
</dbReference>
<dbReference type="GO" id="GO:0043022">
    <property type="term" value="F:ribosome binding"/>
    <property type="evidence" value="ECO:0007669"/>
    <property type="project" value="InterPro"/>
</dbReference>
<dbReference type="GO" id="GO:0042274">
    <property type="term" value="P:ribosomal small subunit biogenesis"/>
    <property type="evidence" value="ECO:0007669"/>
    <property type="project" value="UniProtKB-UniRule"/>
</dbReference>
<dbReference type="GO" id="GO:0006364">
    <property type="term" value="P:rRNA processing"/>
    <property type="evidence" value="ECO:0007669"/>
    <property type="project" value="UniProtKB-UniRule"/>
</dbReference>
<dbReference type="Gene3D" id="2.30.30.240">
    <property type="entry name" value="PRC-barrel domain"/>
    <property type="match status" value="1"/>
</dbReference>
<dbReference type="Gene3D" id="2.40.30.60">
    <property type="entry name" value="RimM"/>
    <property type="match status" value="1"/>
</dbReference>
<dbReference type="HAMAP" id="MF_00014">
    <property type="entry name" value="Ribosome_mat_RimM"/>
    <property type="match status" value="1"/>
</dbReference>
<dbReference type="InterPro" id="IPR011033">
    <property type="entry name" value="PRC_barrel-like_sf"/>
</dbReference>
<dbReference type="InterPro" id="IPR056792">
    <property type="entry name" value="PRC_RimM"/>
</dbReference>
<dbReference type="InterPro" id="IPR011961">
    <property type="entry name" value="RimM"/>
</dbReference>
<dbReference type="InterPro" id="IPR002676">
    <property type="entry name" value="RimM_N"/>
</dbReference>
<dbReference type="InterPro" id="IPR036976">
    <property type="entry name" value="RimM_N_sf"/>
</dbReference>
<dbReference type="InterPro" id="IPR009000">
    <property type="entry name" value="Transl_B-barrel_sf"/>
</dbReference>
<dbReference type="NCBIfam" id="TIGR02273">
    <property type="entry name" value="16S_RimM"/>
    <property type="match status" value="1"/>
</dbReference>
<dbReference type="PANTHER" id="PTHR33692">
    <property type="entry name" value="RIBOSOME MATURATION FACTOR RIMM"/>
    <property type="match status" value="1"/>
</dbReference>
<dbReference type="PANTHER" id="PTHR33692:SF1">
    <property type="entry name" value="RIBOSOME MATURATION FACTOR RIMM"/>
    <property type="match status" value="1"/>
</dbReference>
<dbReference type="Pfam" id="PF24986">
    <property type="entry name" value="PRC_RimM"/>
    <property type="match status" value="1"/>
</dbReference>
<dbReference type="Pfam" id="PF01782">
    <property type="entry name" value="RimM"/>
    <property type="match status" value="1"/>
</dbReference>
<dbReference type="SUPFAM" id="SSF50346">
    <property type="entry name" value="PRC-barrel domain"/>
    <property type="match status" value="1"/>
</dbReference>
<dbReference type="SUPFAM" id="SSF50447">
    <property type="entry name" value="Translation proteins"/>
    <property type="match status" value="1"/>
</dbReference>
<keyword id="KW-0143">Chaperone</keyword>
<keyword id="KW-0963">Cytoplasm</keyword>
<keyword id="KW-1185">Reference proteome</keyword>
<keyword id="KW-0690">Ribosome biogenesis</keyword>
<keyword id="KW-0698">rRNA processing</keyword>